<accession>B8ZRJ6</accession>
<name>RL35_MYCLB</name>
<reference key="1">
    <citation type="journal article" date="2009" name="Nat. Genet.">
        <title>Comparative genomic and phylogeographic analysis of Mycobacterium leprae.</title>
        <authorList>
            <person name="Monot M."/>
            <person name="Honore N."/>
            <person name="Garnier T."/>
            <person name="Zidane N."/>
            <person name="Sherafi D."/>
            <person name="Paniz-Mondolfi A."/>
            <person name="Matsuoka M."/>
            <person name="Taylor G.M."/>
            <person name="Donoghue H.D."/>
            <person name="Bouwman A."/>
            <person name="Mays S."/>
            <person name="Watson C."/>
            <person name="Lockwood D."/>
            <person name="Khamispour A."/>
            <person name="Dowlati Y."/>
            <person name="Jianping S."/>
            <person name="Rea T.H."/>
            <person name="Vera-Cabrera L."/>
            <person name="Stefani M.M."/>
            <person name="Banu S."/>
            <person name="Macdonald M."/>
            <person name="Sapkota B.R."/>
            <person name="Spencer J.S."/>
            <person name="Thomas J."/>
            <person name="Harshman K."/>
            <person name="Singh P."/>
            <person name="Busso P."/>
            <person name="Gattiker A."/>
            <person name="Rougemont J."/>
            <person name="Brennan P.J."/>
            <person name="Cole S.T."/>
        </authorList>
    </citation>
    <scope>NUCLEOTIDE SEQUENCE [LARGE SCALE GENOMIC DNA]</scope>
    <source>
        <strain>Br4923</strain>
    </source>
</reference>
<evidence type="ECO:0000255" key="1">
    <source>
        <dbReference type="HAMAP-Rule" id="MF_00514"/>
    </source>
</evidence>
<evidence type="ECO:0000256" key="2">
    <source>
        <dbReference type="SAM" id="MobiDB-lite"/>
    </source>
</evidence>
<evidence type="ECO:0000305" key="3"/>
<proteinExistence type="inferred from homology"/>
<feature type="chain" id="PRO_1000194084" description="Large ribosomal subunit protein bL35">
    <location>
        <begin position="1"/>
        <end position="64"/>
    </location>
</feature>
<feature type="region of interest" description="Disordered" evidence="2">
    <location>
        <begin position="1"/>
        <end position="22"/>
    </location>
</feature>
<feature type="region of interest" description="Disordered" evidence="2">
    <location>
        <begin position="34"/>
        <end position="64"/>
    </location>
</feature>
<feature type="compositionally biased region" description="Basic and acidic residues" evidence="2">
    <location>
        <begin position="34"/>
        <end position="48"/>
    </location>
</feature>
<feature type="compositionally biased region" description="Polar residues" evidence="2">
    <location>
        <begin position="50"/>
        <end position="64"/>
    </location>
</feature>
<sequence>MPKAKTHSGASKRFRRTGTGKIVRQKANRRHLFEHKPSTRTRRLDGHTRVSANDTQRVNSLLNG</sequence>
<protein>
    <recommendedName>
        <fullName evidence="1">Large ribosomal subunit protein bL35</fullName>
    </recommendedName>
    <alternativeName>
        <fullName evidence="3">50S ribosomal protein L35</fullName>
    </alternativeName>
</protein>
<comment type="similarity">
    <text evidence="1">Belongs to the bacterial ribosomal protein bL35 family.</text>
</comment>
<gene>
    <name evidence="1" type="primary">rpmI</name>
    <name type="ordered locus">MLBr01395</name>
</gene>
<dbReference type="EMBL" id="FM211192">
    <property type="protein sequence ID" value="CAR71490.1"/>
    <property type="molecule type" value="Genomic_DNA"/>
</dbReference>
<dbReference type="SMR" id="B8ZRJ6"/>
<dbReference type="KEGG" id="mlb:MLBr01395"/>
<dbReference type="HOGENOM" id="CLU_169643_4_2_11"/>
<dbReference type="Proteomes" id="UP000006900">
    <property type="component" value="Chromosome"/>
</dbReference>
<dbReference type="GO" id="GO:0022625">
    <property type="term" value="C:cytosolic large ribosomal subunit"/>
    <property type="evidence" value="ECO:0007669"/>
    <property type="project" value="TreeGrafter"/>
</dbReference>
<dbReference type="GO" id="GO:0003735">
    <property type="term" value="F:structural constituent of ribosome"/>
    <property type="evidence" value="ECO:0007669"/>
    <property type="project" value="InterPro"/>
</dbReference>
<dbReference type="GO" id="GO:0006412">
    <property type="term" value="P:translation"/>
    <property type="evidence" value="ECO:0007669"/>
    <property type="project" value="UniProtKB-UniRule"/>
</dbReference>
<dbReference type="FunFam" id="4.10.410.60:FF:000001">
    <property type="entry name" value="50S ribosomal protein L35"/>
    <property type="match status" value="1"/>
</dbReference>
<dbReference type="Gene3D" id="4.10.410.60">
    <property type="match status" value="1"/>
</dbReference>
<dbReference type="HAMAP" id="MF_00514">
    <property type="entry name" value="Ribosomal_bL35"/>
    <property type="match status" value="1"/>
</dbReference>
<dbReference type="InterPro" id="IPR001706">
    <property type="entry name" value="Ribosomal_bL35"/>
</dbReference>
<dbReference type="InterPro" id="IPR021137">
    <property type="entry name" value="Ribosomal_bL35-like"/>
</dbReference>
<dbReference type="InterPro" id="IPR018265">
    <property type="entry name" value="Ribosomal_bL35_CS"/>
</dbReference>
<dbReference type="InterPro" id="IPR037229">
    <property type="entry name" value="Ribosomal_bL35_sf"/>
</dbReference>
<dbReference type="NCBIfam" id="TIGR00001">
    <property type="entry name" value="rpmI_bact"/>
    <property type="match status" value="1"/>
</dbReference>
<dbReference type="PANTHER" id="PTHR33343">
    <property type="entry name" value="54S RIBOSOMAL PROTEIN BL35M"/>
    <property type="match status" value="1"/>
</dbReference>
<dbReference type="PANTHER" id="PTHR33343:SF1">
    <property type="entry name" value="LARGE RIBOSOMAL SUBUNIT PROTEIN BL35M"/>
    <property type="match status" value="1"/>
</dbReference>
<dbReference type="Pfam" id="PF01632">
    <property type="entry name" value="Ribosomal_L35p"/>
    <property type="match status" value="1"/>
</dbReference>
<dbReference type="PRINTS" id="PR00064">
    <property type="entry name" value="RIBOSOMALL35"/>
</dbReference>
<dbReference type="SUPFAM" id="SSF143034">
    <property type="entry name" value="L35p-like"/>
    <property type="match status" value="1"/>
</dbReference>
<dbReference type="PROSITE" id="PS00936">
    <property type="entry name" value="RIBOSOMAL_L35"/>
    <property type="match status" value="1"/>
</dbReference>
<organism>
    <name type="scientific">Mycobacterium leprae (strain Br4923)</name>
    <dbReference type="NCBI Taxonomy" id="561304"/>
    <lineage>
        <taxon>Bacteria</taxon>
        <taxon>Bacillati</taxon>
        <taxon>Actinomycetota</taxon>
        <taxon>Actinomycetes</taxon>
        <taxon>Mycobacteriales</taxon>
        <taxon>Mycobacteriaceae</taxon>
        <taxon>Mycobacterium</taxon>
    </lineage>
</organism>
<keyword id="KW-0687">Ribonucleoprotein</keyword>
<keyword id="KW-0689">Ribosomal protein</keyword>